<organism>
    <name type="scientific">Streptococcus pyogenes serotype M18 (strain MGAS8232)</name>
    <dbReference type="NCBI Taxonomy" id="186103"/>
    <lineage>
        <taxon>Bacteria</taxon>
        <taxon>Bacillati</taxon>
        <taxon>Bacillota</taxon>
        <taxon>Bacilli</taxon>
        <taxon>Lactobacillales</taxon>
        <taxon>Streptococcaceae</taxon>
        <taxon>Streptococcus</taxon>
    </lineage>
</organism>
<feature type="chain" id="PRO_0000211164" description="Segregation and condensation protein B">
    <location>
        <begin position="1"/>
        <end position="183"/>
    </location>
</feature>
<evidence type="ECO:0000255" key="1">
    <source>
        <dbReference type="HAMAP-Rule" id="MF_01804"/>
    </source>
</evidence>
<sequence>MTYLSQIEALLFVAGEEGLSLRHLASMLSLTPTALQQQLEKLSQKYEKDQHSSLCLIETANTYRLVTKEGFAELLRAYAKTPMNQSLSRASLEVLSIVAYKQPITRIEIDDIRGVNSSGALSKLLAFDLIREAGKKDVVGRPHLYATTDYFLDYMGINHLDELIEVSAVEPADEEIALFRTQD</sequence>
<dbReference type="EMBL" id="AE009949">
    <property type="protein sequence ID" value="AAL97160.1"/>
    <property type="molecule type" value="Genomic_DNA"/>
</dbReference>
<dbReference type="RefSeq" id="WP_002985894.1">
    <property type="nucleotide sequence ID" value="NC_003485.1"/>
</dbReference>
<dbReference type="SMR" id="P60221"/>
<dbReference type="GeneID" id="69901359"/>
<dbReference type="KEGG" id="spm:spyM18_0417"/>
<dbReference type="HOGENOM" id="CLU_045647_5_3_9"/>
<dbReference type="GO" id="GO:0005737">
    <property type="term" value="C:cytoplasm"/>
    <property type="evidence" value="ECO:0007669"/>
    <property type="project" value="UniProtKB-SubCell"/>
</dbReference>
<dbReference type="GO" id="GO:0051301">
    <property type="term" value="P:cell division"/>
    <property type="evidence" value="ECO:0007669"/>
    <property type="project" value="UniProtKB-KW"/>
</dbReference>
<dbReference type="GO" id="GO:0051304">
    <property type="term" value="P:chromosome separation"/>
    <property type="evidence" value="ECO:0007669"/>
    <property type="project" value="InterPro"/>
</dbReference>
<dbReference type="GO" id="GO:0006260">
    <property type="term" value="P:DNA replication"/>
    <property type="evidence" value="ECO:0007669"/>
    <property type="project" value="UniProtKB-UniRule"/>
</dbReference>
<dbReference type="Gene3D" id="1.10.10.10">
    <property type="entry name" value="Winged helix-like DNA-binding domain superfamily/Winged helix DNA-binding domain"/>
    <property type="match status" value="2"/>
</dbReference>
<dbReference type="HAMAP" id="MF_01804">
    <property type="entry name" value="ScpB"/>
    <property type="match status" value="1"/>
</dbReference>
<dbReference type="InterPro" id="IPR005234">
    <property type="entry name" value="ScpB_csome_segregation"/>
</dbReference>
<dbReference type="InterPro" id="IPR036388">
    <property type="entry name" value="WH-like_DNA-bd_sf"/>
</dbReference>
<dbReference type="InterPro" id="IPR036390">
    <property type="entry name" value="WH_DNA-bd_sf"/>
</dbReference>
<dbReference type="NCBIfam" id="TIGR00281">
    <property type="entry name" value="SMC-Scp complex subunit ScpB"/>
    <property type="match status" value="1"/>
</dbReference>
<dbReference type="PANTHER" id="PTHR34298">
    <property type="entry name" value="SEGREGATION AND CONDENSATION PROTEIN B"/>
    <property type="match status" value="1"/>
</dbReference>
<dbReference type="PANTHER" id="PTHR34298:SF2">
    <property type="entry name" value="SEGREGATION AND CONDENSATION PROTEIN B"/>
    <property type="match status" value="1"/>
</dbReference>
<dbReference type="Pfam" id="PF04079">
    <property type="entry name" value="SMC_ScpB"/>
    <property type="match status" value="1"/>
</dbReference>
<dbReference type="PIRSF" id="PIRSF019345">
    <property type="entry name" value="ScpB"/>
    <property type="match status" value="1"/>
</dbReference>
<dbReference type="SUPFAM" id="SSF46785">
    <property type="entry name" value="Winged helix' DNA-binding domain"/>
    <property type="match status" value="2"/>
</dbReference>
<gene>
    <name evidence="1" type="primary">scpB</name>
    <name type="ordered locus">spyM18_0417</name>
</gene>
<keyword id="KW-0131">Cell cycle</keyword>
<keyword id="KW-0132">Cell division</keyword>
<keyword id="KW-0159">Chromosome partition</keyword>
<keyword id="KW-0963">Cytoplasm</keyword>
<proteinExistence type="inferred from homology"/>
<name>SCPB_STRP8</name>
<protein>
    <recommendedName>
        <fullName evidence="1">Segregation and condensation protein B</fullName>
    </recommendedName>
</protein>
<comment type="function">
    <text evidence="1">Participates in chromosomal partition during cell division. May act via the formation of a condensin-like complex containing Smc and ScpA that pull DNA away from mid-cell into both cell halves.</text>
</comment>
<comment type="subunit">
    <text evidence="1">Homodimer. Homodimerization may be required to stabilize the binding of ScpA to the Smc head domains. Component of a cohesin-like complex composed of ScpA, ScpB and the Smc homodimer, in which ScpA and ScpB bind to the head domain of Smc. The presence of the three proteins is required for the association of the complex with DNA.</text>
</comment>
<comment type="subcellular location">
    <subcellularLocation>
        <location evidence="1">Cytoplasm</location>
    </subcellularLocation>
    <text evidence="1">Associated with two foci at the outer edges of the nucleoid region in young cells, and at four foci within both cell halves in older cells.</text>
</comment>
<comment type="similarity">
    <text evidence="1">Belongs to the ScpB family.</text>
</comment>
<reference key="1">
    <citation type="journal article" date="2002" name="Proc. Natl. Acad. Sci. U.S.A.">
        <title>Genome sequence and comparative microarray analysis of serotype M18 group A Streptococcus strains associated with acute rheumatic fever outbreaks.</title>
        <authorList>
            <person name="Smoot J.C."/>
            <person name="Barbian K.D."/>
            <person name="Van Gompel J.J."/>
            <person name="Smoot L.M."/>
            <person name="Chaussee M.S."/>
            <person name="Sylva G.L."/>
            <person name="Sturdevant D.E."/>
            <person name="Ricklefs S.M."/>
            <person name="Porcella S.F."/>
            <person name="Parkins L.D."/>
            <person name="Beres S.B."/>
            <person name="Campbell D.S."/>
            <person name="Smith T.M."/>
            <person name="Zhang Q."/>
            <person name="Kapur V."/>
            <person name="Daly J.A."/>
            <person name="Veasy L.G."/>
            <person name="Musser J.M."/>
        </authorList>
    </citation>
    <scope>NUCLEOTIDE SEQUENCE [LARGE SCALE GENOMIC DNA]</scope>
    <source>
        <strain>MGAS8232</strain>
    </source>
</reference>
<accession>P60221</accession>
<accession>Q9A1B1</accession>